<comment type="function">
    <text evidence="1">May be an effector molecule of cytotoxic activity. Has antimicrobial activity (By similarity).</text>
</comment>
<comment type="subcellular location">
    <subcellularLocation>
        <location evidence="1">Secreted</location>
    </subcellularLocation>
</comment>
<comment type="sequence caution" evidence="4">
    <conflict type="erroneous initiation">
        <sequence resource="EMBL-CDS" id="AAN10122"/>
    </conflict>
</comment>
<accession>Q8HZQ3</accession>
<organism>
    <name type="scientific">Equus caballus</name>
    <name type="common">Horse</name>
    <dbReference type="NCBI Taxonomy" id="9796"/>
    <lineage>
        <taxon>Eukaryota</taxon>
        <taxon>Metazoa</taxon>
        <taxon>Chordata</taxon>
        <taxon>Craniata</taxon>
        <taxon>Vertebrata</taxon>
        <taxon>Euteleostomi</taxon>
        <taxon>Mammalia</taxon>
        <taxon>Eutheria</taxon>
        <taxon>Laurasiatheria</taxon>
        <taxon>Perissodactyla</taxon>
        <taxon>Equidae</taxon>
        <taxon>Equus</taxon>
    </lineage>
</organism>
<gene>
    <name type="primary">NKL</name>
</gene>
<sequence length="145" mass="15880">MTSRALLLLASALLGTPGLTFSGLNPESYDLATAHLSDGEQFCQGLTQEDLQGDLLTERERQGIACWSCRKILQKLEDLVGEQPNEATINEAASRVCRNLGLLRGACKKIMRTCLRLISRDILAGKKPQEVCVDIKLCKHKAGLI</sequence>
<protein>
    <recommendedName>
        <fullName>Antimicrobial peptide NK-lysin</fullName>
    </recommendedName>
</protein>
<evidence type="ECO:0000250" key="1"/>
<evidence type="ECO:0000255" key="2"/>
<evidence type="ECO:0000255" key="3">
    <source>
        <dbReference type="PROSITE-ProRule" id="PRU00415"/>
    </source>
</evidence>
<evidence type="ECO:0000305" key="4"/>
<proteinExistence type="evidence at transcript level"/>
<name>NKL_HORSE</name>
<reference key="1">
    <citation type="submission" date="2002-10" db="EMBL/GenBank/DDBJ databases">
        <title>cDNA sequence of equine NK-lysin.</title>
        <authorList>
            <person name="Davis E.G."/>
            <person name="Zhang G."/>
            <person name="Sang Y."/>
            <person name="Rush B.R."/>
            <person name="Ross C."/>
            <person name="Blecha F."/>
        </authorList>
    </citation>
    <scope>NUCLEOTIDE SEQUENCE [MRNA]</scope>
</reference>
<dbReference type="EMBL" id="AF538056">
    <property type="protein sequence ID" value="AAN10122.2"/>
    <property type="status" value="ALT_INIT"/>
    <property type="molecule type" value="mRNA"/>
</dbReference>
<dbReference type="RefSeq" id="NP_001075398.2">
    <property type="nucleotide sequence ID" value="NM_001081929.3"/>
</dbReference>
<dbReference type="SMR" id="Q8HZQ3"/>
<dbReference type="FunCoup" id="Q8HZQ3">
    <property type="interactions" value="12"/>
</dbReference>
<dbReference type="STRING" id="9796.ENSECAP00000031488"/>
<dbReference type="PaxDb" id="9796-ENSECAP00000031488"/>
<dbReference type="GeneID" id="100034133"/>
<dbReference type="KEGG" id="ecb:100034133"/>
<dbReference type="CTD" id="10578"/>
<dbReference type="HOGENOM" id="CLU_141709_0_0_1"/>
<dbReference type="InParanoid" id="Q8HZQ3"/>
<dbReference type="OrthoDB" id="69496at2759"/>
<dbReference type="Proteomes" id="UP000002281">
    <property type="component" value="Unplaced"/>
</dbReference>
<dbReference type="GO" id="GO:0005576">
    <property type="term" value="C:extracellular region"/>
    <property type="evidence" value="ECO:0007669"/>
    <property type="project" value="UniProtKB-SubCell"/>
</dbReference>
<dbReference type="GO" id="GO:0061844">
    <property type="term" value="P:antimicrobial humoral immune response mediated by antimicrobial peptide"/>
    <property type="evidence" value="ECO:0000318"/>
    <property type="project" value="GO_Central"/>
</dbReference>
<dbReference type="GO" id="GO:0042742">
    <property type="term" value="P:defense response to bacterium"/>
    <property type="evidence" value="ECO:0000318"/>
    <property type="project" value="GO_Central"/>
</dbReference>
<dbReference type="GO" id="GO:0031640">
    <property type="term" value="P:killing of cells of another organism"/>
    <property type="evidence" value="ECO:0000318"/>
    <property type="project" value="GO_Central"/>
</dbReference>
<dbReference type="Gene3D" id="1.10.225.10">
    <property type="entry name" value="Saposin-like"/>
    <property type="match status" value="1"/>
</dbReference>
<dbReference type="InterPro" id="IPR038847">
    <property type="entry name" value="Granulysin-like"/>
</dbReference>
<dbReference type="InterPro" id="IPR008138">
    <property type="entry name" value="SapB_2"/>
</dbReference>
<dbReference type="InterPro" id="IPR011001">
    <property type="entry name" value="Saposin-like"/>
</dbReference>
<dbReference type="InterPro" id="IPR008139">
    <property type="entry name" value="SaposinB_dom"/>
</dbReference>
<dbReference type="PANTHER" id="PTHR15541:SF2">
    <property type="entry name" value="GRANULYSIN"/>
    <property type="match status" value="1"/>
</dbReference>
<dbReference type="PANTHER" id="PTHR15541">
    <property type="entry name" value="GRANULYSIN RELATED"/>
    <property type="match status" value="1"/>
</dbReference>
<dbReference type="Pfam" id="PF03489">
    <property type="entry name" value="SapB_2"/>
    <property type="match status" value="1"/>
</dbReference>
<dbReference type="SMART" id="SM00741">
    <property type="entry name" value="SapB"/>
    <property type="match status" value="1"/>
</dbReference>
<dbReference type="SUPFAM" id="SSF47862">
    <property type="entry name" value="Saposin"/>
    <property type="match status" value="1"/>
</dbReference>
<dbReference type="PROSITE" id="PS50015">
    <property type="entry name" value="SAP_B"/>
    <property type="match status" value="1"/>
</dbReference>
<feature type="signal peptide" evidence="2">
    <location>
        <begin position="1"/>
        <end position="22"/>
    </location>
</feature>
<feature type="propeptide" id="PRO_0000031660" evidence="1">
    <location>
        <begin position="23"/>
        <end position="62"/>
    </location>
</feature>
<feature type="peptide" id="PRO_0000031661" description="Antimicrobial peptide NK-lysin">
    <location>
        <begin position="63"/>
        <end position="140"/>
    </location>
</feature>
<feature type="propeptide" id="PRO_0000031662" evidence="1">
    <location>
        <begin position="141"/>
        <end position="145"/>
    </location>
</feature>
<feature type="domain" description="Saposin B-type" evidence="3">
    <location>
        <begin position="62"/>
        <end position="142"/>
    </location>
</feature>
<feature type="disulfide bond" evidence="3">
    <location>
        <begin position="66"/>
        <end position="138"/>
    </location>
</feature>
<feature type="disulfide bond" evidence="3">
    <location>
        <begin position="69"/>
        <end position="132"/>
    </location>
</feature>
<feature type="disulfide bond" evidence="3">
    <location>
        <begin position="97"/>
        <end position="107"/>
    </location>
</feature>
<keyword id="KW-0044">Antibiotic</keyword>
<keyword id="KW-0929">Antimicrobial</keyword>
<keyword id="KW-1015">Disulfide bond</keyword>
<keyword id="KW-1185">Reference proteome</keyword>
<keyword id="KW-0964">Secreted</keyword>
<keyword id="KW-0732">Signal</keyword>